<reference key="1">
    <citation type="journal article" date="1991" name="J. Gen. Virol.">
        <title>Comparative sequence analysis of the long repeat regions and adjoining parts of the long unique regions in the genomes of herpes simplex viruses types 1 and 2.</title>
        <authorList>
            <person name="McGeoch D.J."/>
            <person name="Cunningham C."/>
            <person name="McIntyre G."/>
            <person name="Dolan A."/>
        </authorList>
    </citation>
    <scope>NUCLEOTIDE SEQUENCE [GENOMIC DNA]</scope>
</reference>
<reference key="2">
    <citation type="journal article" date="1998" name="J. Virol.">
        <title>The genome sequence of herpes simplex virus type 2.</title>
        <authorList>
            <person name="Dolan A."/>
            <person name="Jamieson F.E."/>
            <person name="Cunningham C."/>
            <person name="Barnett B.C."/>
            <person name="McGeoch D.J."/>
        </authorList>
    </citation>
    <scope>NUCLEOTIDE SEQUENCE [LARGE SCALE GENOMIC DNA]</scope>
</reference>
<reference key="3">
    <citation type="journal article" date="1998" name="J. Gen. Virol.">
        <title>Characterization of the UL55 gene product of herpes simplex virus type 2.</title>
        <authorList>
            <person name="Yamada H."/>
            <person name="Jiang Y.M."/>
            <person name="Oshima S."/>
            <person name="Daikoku T."/>
            <person name="Yamashita Y."/>
            <person name="Tsurumi T."/>
            <person name="Nishiyama Y."/>
        </authorList>
    </citation>
    <scope>SUBCELLULAR LOCATION</scope>
</reference>
<comment type="subcellular location">
    <subcellularLocation>
        <location evidence="1">Virion tegument</location>
    </subcellularLocation>
    <subcellularLocation>
        <location evidence="2">Host nucleus matrix</location>
    </subcellularLocation>
</comment>
<comment type="similarity">
    <text evidence="3">Belongs to the alphaherpesvirinae HHV-1 UL55 family.</text>
</comment>
<name>TEG6_HHV2H</name>
<gene>
    <name type="ORF">UL55</name>
</gene>
<feature type="chain" id="PRO_0000116119" description="Tegument protein UL55">
    <location>
        <begin position="1"/>
        <end position="186"/>
    </location>
</feature>
<organism>
    <name type="scientific">Human herpesvirus 2 (strain HG52)</name>
    <name type="common">HHV-2</name>
    <name type="synonym">Human herpes simplex virus 2</name>
    <dbReference type="NCBI Taxonomy" id="10315"/>
    <lineage>
        <taxon>Viruses</taxon>
        <taxon>Duplodnaviria</taxon>
        <taxon>Heunggongvirae</taxon>
        <taxon>Peploviricota</taxon>
        <taxon>Herviviricetes</taxon>
        <taxon>Herpesvirales</taxon>
        <taxon>Orthoherpesviridae</taxon>
        <taxon>Alphaherpesvirinae</taxon>
        <taxon>Simplexvirus</taxon>
        <taxon>Simplexvirus humanalpha2</taxon>
        <taxon>Human herpesvirus 2</taxon>
    </lineage>
</organism>
<organismHost>
    <name type="scientific">Homo sapiens</name>
    <name type="common">Human</name>
    <dbReference type="NCBI Taxonomy" id="9606"/>
</organismHost>
<keyword id="KW-1048">Host nucleus</keyword>
<keyword id="KW-1185">Reference proteome</keyword>
<keyword id="KW-0946">Virion</keyword>
<keyword id="KW-0920">Virion tegument</keyword>
<protein>
    <recommendedName>
        <fullName>Tegument protein UL55</fullName>
    </recommendedName>
</protein>
<accession>P28281</accession>
<dbReference type="EMBL" id="D10471">
    <property type="protein sequence ID" value="BAA01270.1"/>
    <property type="molecule type" value="Genomic_DNA"/>
</dbReference>
<dbReference type="EMBL" id="Z86099">
    <property type="protein sequence ID" value="CAB06703.1"/>
    <property type="molecule type" value="Genomic_DNA"/>
</dbReference>
<dbReference type="PIR" id="JQ1499">
    <property type="entry name" value="WMBEXB"/>
</dbReference>
<dbReference type="RefSeq" id="YP_009137208.1">
    <property type="nucleotide sequence ID" value="NC_001798.2"/>
</dbReference>
<dbReference type="DNASU" id="1487344"/>
<dbReference type="GeneID" id="1487344"/>
<dbReference type="KEGG" id="vg:1487344"/>
<dbReference type="Proteomes" id="UP000001874">
    <property type="component" value="Segment"/>
</dbReference>
<dbReference type="GO" id="GO:0044204">
    <property type="term" value="C:host cell nuclear matrix"/>
    <property type="evidence" value="ECO:0007669"/>
    <property type="project" value="UniProtKB-SubCell"/>
</dbReference>
<dbReference type="GO" id="GO:0019033">
    <property type="term" value="C:viral tegument"/>
    <property type="evidence" value="ECO:0007669"/>
    <property type="project" value="UniProtKB-SubCell"/>
</dbReference>
<dbReference type="GO" id="GO:0019058">
    <property type="term" value="P:viral life cycle"/>
    <property type="evidence" value="ECO:0007669"/>
    <property type="project" value="InterPro"/>
</dbReference>
<dbReference type="InterPro" id="IPR007622">
    <property type="entry name" value="Herpes_UL55"/>
</dbReference>
<dbReference type="Pfam" id="PF04537">
    <property type="entry name" value="Herpes_UL55"/>
    <property type="match status" value="1"/>
</dbReference>
<sequence length="186" mass="20441">MTTTPLSNLFLRAPDITHVAPPYCLNATWQAENALHTTKTDPACLAARSYLVRASCSTSGPIHCFFFAVYKDSQHSLPLVTELRNFADLVNHPPVLRELEDKRGGRLRCTGPFSCGTIKDVSGASPAGEYTINGIVYHCHCRYPFSKTCWLGASAALQHLRSISSSGTAARAAEQRRHKIKIKIKV</sequence>
<evidence type="ECO:0000250" key="1"/>
<evidence type="ECO:0000269" key="2">
    <source>
    </source>
</evidence>
<evidence type="ECO:0000305" key="3"/>
<proteinExistence type="inferred from homology"/>